<evidence type="ECO:0000255" key="1">
    <source>
        <dbReference type="HAMAP-Rule" id="MF_04070"/>
    </source>
</evidence>
<evidence type="ECO:0000256" key="2">
    <source>
        <dbReference type="SAM" id="MobiDB-lite"/>
    </source>
</evidence>
<evidence type="ECO:0000269" key="3">
    <source>
    </source>
</evidence>
<evidence type="ECO:0000269" key="4">
    <source>
    </source>
</evidence>
<evidence type="ECO:0007829" key="5">
    <source>
        <dbReference type="PDB" id="3ZDP"/>
    </source>
</evidence>
<evidence type="ECO:0007829" key="6">
    <source>
        <dbReference type="PDB" id="5B7B"/>
    </source>
</evidence>
<evidence type="ECO:0007829" key="7">
    <source>
        <dbReference type="PDB" id="6J1U"/>
    </source>
</evidence>
<proteinExistence type="evidence at protein level"/>
<dbReference type="EMBL" id="M30746">
    <property type="protein sequence ID" value="AAA43452.1"/>
    <property type="molecule type" value="Genomic_RNA"/>
</dbReference>
<dbReference type="PDB" id="3ZDP">
    <property type="method" value="X-ray"/>
    <property type="resolution" value="2.69 A"/>
    <property type="chains" value="A/B/C=1-498"/>
</dbReference>
<dbReference type="PDB" id="4BBL">
    <property type="method" value="EM"/>
    <property type="resolution" value="18.00 A"/>
    <property type="chains" value="A/B/C/D/E/F/G/H/I/J/K/L/M/N/O/P/Q/R/S/T/U/V/W/X=8-498"/>
</dbReference>
<dbReference type="PDB" id="4IRY">
    <property type="method" value="X-ray"/>
    <property type="resolution" value="2.80 A"/>
    <property type="chains" value="A/B=1-401, A/B=430-498"/>
</dbReference>
<dbReference type="PDB" id="5B7B">
    <property type="method" value="X-ray"/>
    <property type="resolution" value="3.00 A"/>
    <property type="chains" value="A/B/C/D/E/F=1-498"/>
</dbReference>
<dbReference type="PDB" id="6I7B">
    <property type="method" value="EM"/>
    <property type="resolution" value="10.00 A"/>
    <property type="chains" value="B/D=402-420"/>
</dbReference>
<dbReference type="PDB" id="6I85">
    <property type="method" value="EM"/>
    <property type="resolution" value="24.00 A"/>
    <property type="chains" value="B/D=402-428"/>
</dbReference>
<dbReference type="PDB" id="6J1U">
    <property type="method" value="X-ray"/>
    <property type="resolution" value="2.80 A"/>
    <property type="chains" value="A/B/C=1-498"/>
</dbReference>
<dbReference type="PDB" id="9GAQ">
    <property type="method" value="EM"/>
    <property type="resolution" value="3.60 A"/>
    <property type="chains" value="A/B=15-498"/>
</dbReference>
<dbReference type="PDBsum" id="3ZDP"/>
<dbReference type="PDBsum" id="4BBL"/>
<dbReference type="PDBsum" id="4IRY"/>
<dbReference type="PDBsum" id="5B7B"/>
<dbReference type="PDBsum" id="6I7B"/>
<dbReference type="PDBsum" id="6I85"/>
<dbReference type="PDBsum" id="6J1U"/>
<dbReference type="PDBsum" id="9GAQ"/>
<dbReference type="EMDB" id="EMD-2205"/>
<dbReference type="EMDB" id="EMD-4423"/>
<dbReference type="EMDB" id="EMD-4426"/>
<dbReference type="EMDB" id="EMD-4430"/>
<dbReference type="SMR" id="P15682"/>
<dbReference type="IntAct" id="P15682">
    <property type="interactions" value="1"/>
</dbReference>
<dbReference type="BindingDB" id="P15682"/>
<dbReference type="ChEMBL" id="CHEMBL3706556"/>
<dbReference type="EvolutionaryTrace" id="P15682"/>
<dbReference type="PRO" id="PR:P15682"/>
<dbReference type="GO" id="GO:0019029">
    <property type="term" value="C:helical viral capsid"/>
    <property type="evidence" value="ECO:0007669"/>
    <property type="project" value="UniProtKB-UniRule"/>
</dbReference>
<dbReference type="GO" id="GO:0043657">
    <property type="term" value="C:host cell"/>
    <property type="evidence" value="ECO:0007669"/>
    <property type="project" value="GOC"/>
</dbReference>
<dbReference type="GO" id="GO:0042025">
    <property type="term" value="C:host cell nucleus"/>
    <property type="evidence" value="ECO:0007669"/>
    <property type="project" value="UniProtKB-SubCell"/>
</dbReference>
<dbReference type="GO" id="GO:1990904">
    <property type="term" value="C:ribonucleoprotein complex"/>
    <property type="evidence" value="ECO:0007669"/>
    <property type="project" value="UniProtKB-KW"/>
</dbReference>
<dbReference type="GO" id="GO:0019013">
    <property type="term" value="C:viral nucleocapsid"/>
    <property type="evidence" value="ECO:0007669"/>
    <property type="project" value="UniProtKB-UniRule"/>
</dbReference>
<dbReference type="GO" id="GO:0003723">
    <property type="term" value="F:RNA binding"/>
    <property type="evidence" value="ECO:0007669"/>
    <property type="project" value="UniProtKB-UniRule"/>
</dbReference>
<dbReference type="GO" id="GO:0005198">
    <property type="term" value="F:structural molecule activity"/>
    <property type="evidence" value="ECO:0007669"/>
    <property type="project" value="UniProtKB-UniRule"/>
</dbReference>
<dbReference type="GO" id="GO:0039689">
    <property type="term" value="P:negative stranded viral RNA replication"/>
    <property type="evidence" value="ECO:0000314"/>
    <property type="project" value="UniProtKB"/>
</dbReference>
<dbReference type="GO" id="GO:0046718">
    <property type="term" value="P:symbiont entry into host cell"/>
    <property type="evidence" value="ECO:0007669"/>
    <property type="project" value="UniProtKB-KW"/>
</dbReference>
<dbReference type="GO" id="GO:0075732">
    <property type="term" value="P:viral penetration into host nucleus"/>
    <property type="evidence" value="ECO:0007669"/>
    <property type="project" value="UniProtKB-UniRule"/>
</dbReference>
<dbReference type="HAMAP" id="MF_04070">
    <property type="entry name" value="INFV_NCAP"/>
    <property type="match status" value="1"/>
</dbReference>
<dbReference type="InterPro" id="IPR002141">
    <property type="entry name" value="Flu_NP"/>
</dbReference>
<dbReference type="Pfam" id="PF00506">
    <property type="entry name" value="Flu_NP"/>
    <property type="match status" value="1"/>
</dbReference>
<dbReference type="SUPFAM" id="SSF161003">
    <property type="entry name" value="flu NP-like"/>
    <property type="match status" value="1"/>
</dbReference>
<keyword id="KW-0002">3D-structure</keyword>
<keyword id="KW-0167">Capsid protein</keyword>
<keyword id="KW-1139">Helical capsid protein</keyword>
<keyword id="KW-1048">Host nucleus</keyword>
<keyword id="KW-0945">Host-virus interaction</keyword>
<keyword id="KW-0687">Ribonucleoprotein</keyword>
<keyword id="KW-0694">RNA-binding</keyword>
<keyword id="KW-0543">Viral nucleoprotein</keyword>
<keyword id="KW-1163">Viral penetration into host nucleus</keyword>
<keyword id="KW-0946">Virion</keyword>
<keyword id="KW-1160">Virus entry into host cell</keyword>
<protein>
    <recommendedName>
        <fullName evidence="1">Nucleoprotein</fullName>
    </recommendedName>
    <alternativeName>
        <fullName evidence="1">Nucleocapsid protein</fullName>
        <shortName evidence="1">Protein N</shortName>
    </alternativeName>
</protein>
<organismHost>
    <name type="scientific">Aves</name>
    <dbReference type="NCBI Taxonomy" id="8782"/>
</organismHost>
<organismHost>
    <name type="scientific">Homo sapiens</name>
    <name type="common">Human</name>
    <dbReference type="NCBI Taxonomy" id="9606"/>
</organismHost>
<organismHost>
    <name type="scientific">Sus scrofa</name>
    <name type="common">Pig</name>
    <dbReference type="NCBI Taxonomy" id="9823"/>
</organismHost>
<sequence length="498" mass="56244">MATKGTKRSYEQMETDGERQNATEIRASVGKMIGGIGRFYIQMCTELKLSDYEGRLIQNSLTIERMVLSAFDERRNKYLEEHPSAGKDPKKTGGPIYRRVDGKWMRELILYDKEEIRRIWRQANNGDDATAGLTHMMIWHSNLNDATYQRTRALVRTGMDPRMCSLMQGSTLPRRSGAAGAAVKGVGTMVMELIRMIKRGINDRNFWRGENGRRTRIAYERMCNILKGKFQTAAQRAMVDQVRESRNPGNAEFEDLIFLARSALILRGSVAHKSCLPACVYGPAVASGYDFEREGYSLVGIDPFRLLQNSQVYSLIRPNENPAHKSQLVWMACHSAAFEDLRVSSFIRGTKVVPRGKLSTRGVQIASNENMETMESSTLELRSRYWAIRTRSGGNTNQQRASSGQISIQPTFSVQRNLPFDRPTIMAAFTGNTEGRTSDMRTEIIRLMESARPEDVSFQGRGVFELSDEKAASPIVPSFDMSNEGSYFFGDNAEEYDN</sequence>
<comment type="function">
    <text evidence="1 4">Encapsidates the negative strand viral RNA, protecting it from nucleases. The encapsidated genomic RNA is termed the ribonucleoprotein (RNP) and serves as template for transcription and replication. The RNP needs to be localized in the host nucleus to start an infectious cycle, but is too large to diffuse through the nuclear pore complex. NP comprises at least 2 nuclear localization signals that are responsible for the active RNP import into the nucleus through cellular importin alpha/beta pathway. Later in the infection, nclear export of RNPs are mediated through viral proteins NEP interacting with M1 which binds nucleoproteins. It is possible that nucleoprotein binds directly host exportin-1/XPO1 and plays an active role in RNPs nuclear export. M1 interaction with RNP seems to hide nucleoprotein's nuclear localization signals. Soon after a virion infects a new cell, M1 dissociates from the RNP under acidification of the virion driven by M2 protein. Dissociation of M1 from RNP unmasks nucleoprotein's nuclear localization signals, targeting the RNP to the nucleus.</text>
</comment>
<comment type="subunit">
    <text evidence="1">Homomultimerizes to form the nucleocapsid. May bind host exportin-1/XPO1. Binds to viral genomic RNA. Protein-RNA contacts are mediated by a combination of electrostatic interactions between positively charged residues and the phosphate backbone and planar interactions between aromatic side chains and bases.</text>
</comment>
<comment type="subcellular location">
    <subcellularLocation>
        <location evidence="1">Virion</location>
    </subcellularLocation>
    <subcellularLocation>
        <location evidence="1">Host nucleus</location>
    </subcellularLocation>
</comment>
<comment type="PTM">
    <text evidence="1 3">Late in virus-infected cells, may be cleaved from a 56-kDa protein to a 53-kDa protein by a cellular caspase. This cleavage might be a marker for the onset of apoptosis in infected cells or have a specific function in virus host interaction.</text>
</comment>
<comment type="similarity">
    <text evidence="1">Belongs to the influenza viruses nucleoprotein family.</text>
</comment>
<feature type="chain" id="PRO_0000079113" description="Nucleoprotein">
    <location>
        <begin position="1"/>
        <end position="498"/>
    </location>
</feature>
<feature type="region of interest" description="Disordered" evidence="2">
    <location>
        <begin position="1"/>
        <end position="21"/>
    </location>
</feature>
<feature type="short sequence motif" description="Unconventional nuclear localization signal" evidence="1">
    <location>
        <begin position="1"/>
        <end position="18"/>
    </location>
</feature>
<feature type="short sequence motif" description="Bipartite nuclear localization signal" evidence="1">
    <location>
        <begin position="198"/>
        <end position="216"/>
    </location>
</feature>
<feature type="compositionally biased region" description="Basic and acidic residues" evidence="2">
    <location>
        <begin position="8"/>
        <end position="21"/>
    </location>
</feature>
<feature type="helix" evidence="5">
    <location>
        <begin position="22"/>
        <end position="47"/>
    </location>
</feature>
<feature type="helix" evidence="5">
    <location>
        <begin position="51"/>
        <end position="54"/>
    </location>
</feature>
<feature type="helix" evidence="5">
    <location>
        <begin position="57"/>
        <end position="72"/>
    </location>
</feature>
<feature type="strand" evidence="5">
    <location>
        <begin position="75"/>
        <end position="78"/>
    </location>
</feature>
<feature type="strand" evidence="5">
    <location>
        <begin position="95"/>
        <end position="100"/>
    </location>
</feature>
<feature type="strand" evidence="5">
    <location>
        <begin position="103"/>
        <end position="108"/>
    </location>
</feature>
<feature type="helix" evidence="5">
    <location>
        <begin position="113"/>
        <end position="123"/>
    </location>
</feature>
<feature type="turn" evidence="5">
    <location>
        <begin position="124"/>
        <end position="126"/>
    </location>
</feature>
<feature type="helix" evidence="5">
    <location>
        <begin position="130"/>
        <end position="147"/>
    </location>
</feature>
<feature type="helix" evidence="5">
    <location>
        <begin position="151"/>
        <end position="155"/>
    </location>
</feature>
<feature type="turn" evidence="5">
    <location>
        <begin position="156"/>
        <end position="158"/>
    </location>
</feature>
<feature type="helix" evidence="5">
    <location>
        <begin position="161"/>
        <end position="166"/>
    </location>
</feature>
<feature type="turn" evidence="5">
    <location>
        <begin position="168"/>
        <end position="171"/>
    </location>
</feature>
<feature type="turn" evidence="5">
    <location>
        <begin position="178"/>
        <end position="180"/>
    </location>
</feature>
<feature type="helix" evidence="5">
    <location>
        <begin position="181"/>
        <end position="183"/>
    </location>
</feature>
<feature type="helix" evidence="5">
    <location>
        <begin position="186"/>
        <end position="199"/>
    </location>
</feature>
<feature type="strand" evidence="5">
    <location>
        <begin position="200"/>
        <end position="202"/>
    </location>
</feature>
<feature type="strand" evidence="5">
    <location>
        <begin position="204"/>
        <end position="210"/>
    </location>
</feature>
<feature type="helix" evidence="5">
    <location>
        <begin position="211"/>
        <end position="229"/>
    </location>
</feature>
<feature type="helix" evidence="5">
    <location>
        <begin position="233"/>
        <end position="243"/>
    </location>
</feature>
<feature type="helix" evidence="5">
    <location>
        <begin position="250"/>
        <end position="263"/>
    </location>
</feature>
<feature type="helix" evidence="5">
    <location>
        <begin position="278"/>
        <end position="286"/>
    </location>
</feature>
<feature type="helix" evidence="5">
    <location>
        <begin position="291"/>
        <end position="294"/>
    </location>
</feature>
<feature type="helix" evidence="5">
    <location>
        <begin position="301"/>
        <end position="309"/>
    </location>
</feature>
<feature type="strand" evidence="5">
    <location>
        <begin position="313"/>
        <end position="316"/>
    </location>
</feature>
<feature type="helix" evidence="5">
    <location>
        <begin position="322"/>
        <end position="333"/>
    </location>
</feature>
<feature type="helix" evidence="5">
    <location>
        <begin position="341"/>
        <end position="348"/>
    </location>
</feature>
<feature type="helix" evidence="5">
    <location>
        <begin position="355"/>
        <end position="357"/>
    </location>
</feature>
<feature type="strand" evidence="6">
    <location>
        <begin position="371"/>
        <end position="373"/>
    </location>
</feature>
<feature type="strand" evidence="5">
    <location>
        <begin position="375"/>
        <end position="378"/>
    </location>
</feature>
<feature type="strand" evidence="5">
    <location>
        <begin position="384"/>
        <end position="390"/>
    </location>
</feature>
<feature type="helix" evidence="5">
    <location>
        <begin position="422"/>
        <end position="428"/>
    </location>
</feature>
<feature type="strand" evidence="5">
    <location>
        <begin position="433"/>
        <end position="435"/>
    </location>
</feature>
<feature type="helix" evidence="5">
    <location>
        <begin position="439"/>
        <end position="449"/>
    </location>
</feature>
<feature type="strand" evidence="7">
    <location>
        <begin position="456"/>
        <end position="458"/>
    </location>
</feature>
<feature type="strand" evidence="5">
    <location>
        <begin position="460"/>
        <end position="465"/>
    </location>
</feature>
<feature type="strand" evidence="7">
    <location>
        <begin position="480"/>
        <end position="482"/>
    </location>
</feature>
<feature type="turn" evidence="5">
    <location>
        <begin position="487"/>
        <end position="490"/>
    </location>
</feature>
<name>NCAP_I33A0</name>
<gene>
    <name evidence="1" type="primary">NP</name>
</gene>
<reference key="1">
    <citation type="journal article" date="1990" name="J. Virol.">
        <title>Evolution of the nucleoprotein gene of influenza A virus.</title>
        <authorList>
            <person name="Gorman O.T."/>
            <person name="Bean W.J."/>
            <person name="Kawaoka Y."/>
            <person name="Webster R.G."/>
        </authorList>
    </citation>
    <scope>NUCLEOTIDE SEQUENCE [GENOMIC RNA]</scope>
</reference>
<reference key="2">
    <citation type="journal article" date="1999" name="J. Virol.">
        <title>Caspase-dependent N-terminal cleavage of influenza virus nucleocapsid protein in infected cells.</title>
        <authorList>
            <person name="Zhirnov O.P."/>
            <person name="Konakova T.E."/>
            <person name="Garten W."/>
            <person name="Klenk H."/>
        </authorList>
    </citation>
    <scope>CLEAVAGE</scope>
</reference>
<reference key="3">
    <citation type="journal article" date="2005" name="Traffic">
        <title>An unconventional NLS is critical for the nuclear import of the influenza A virus nucleoprotein and ribonucleoprotein.</title>
        <authorList>
            <person name="Cros J.F."/>
            <person name="Garcia-Sastre A."/>
            <person name="Palese P."/>
        </authorList>
    </citation>
    <scope>FUNCTION</scope>
</reference>
<organism>
    <name type="scientific">Influenza A virus (strain A/Wilson-Smith/1933 H1N1)</name>
    <name type="common">Influenza A virus (strain A/WS/1933 H1N1)</name>
    <dbReference type="NCBI Taxonomy" id="381518"/>
    <lineage>
        <taxon>Viruses</taxon>
        <taxon>Riboviria</taxon>
        <taxon>Orthornavirae</taxon>
        <taxon>Negarnaviricota</taxon>
        <taxon>Polyploviricotina</taxon>
        <taxon>Insthoviricetes</taxon>
        <taxon>Articulavirales</taxon>
        <taxon>Orthomyxoviridae</taxon>
        <taxon>Alphainfluenzavirus</taxon>
        <taxon>Alphainfluenzavirus influenzae</taxon>
        <taxon>Influenza A virus</taxon>
    </lineage>
</organism>
<accession>P15682</accession>